<accession>O57276</accession>
<reference key="1">
    <citation type="journal article" date="1998" name="Virus Res.">
        <title>Multiple alignment comparison of the non-structural genes of influenza A viruses.</title>
        <authorList>
            <person name="Suarez D.L."/>
            <person name="Perdue M.L."/>
        </authorList>
    </citation>
    <scope>NUCLEOTIDE SEQUENCE [GENOMIC RNA]</scope>
</reference>
<comment type="function">
    <text evidence="1">Inhibits post-transcriptional processing of cellular pre-mRNA, by binding and inhibiting two cellular proteins that are required for the 3'-end processing of cellular pre-mRNAs: the 30 kDa cleavage and polyadenylation specificity factor/CPSF4 and the poly(A)-binding protein 2/PABPN1. In turn, unprocessed 3' end pre-mRNAs accumulate in the host nucleus and are no longer exported to the cytoplasm. Cellular protein synthesis is thereby shut off very early after virus infection. Viral protein synthesis is not affected by the inhibition of the cellular 3' end processing machinery because the poly(A) tails of viral mRNAs are produced by the viral polymerase through a stuttering mechanism. Prevents the establishment of the cellular antiviral state by inhibiting TRIM25-mediated RIGI ubiquitination, which normally triggers the antiviral transduction signal that leads to the activation of type I IFN genes by transcription factors IRF3 and IRF7. Also binds poly(A) and U6 snRNA. Inhibits the integrated stress response (ISR) in the infected cell by blocking dsRNA binding by EIF2AK2/PKR and further phosphorylation of EIF2S1/EIF-2ALPHA. Stress granule formation is thus inhibited, which allows protein synthesis and viral replication.</text>
</comment>
<comment type="subunit">
    <text evidence="1">Homodimer. Interacts with host TRIM25 (via coiled coil); this interaction specifically inhibits TRIM25 multimerization and TRIM25-mediated RIGI CARD ubiquitination. Interacts with human EIF2AK2/PKR, CPSF4, IVNS1ABP and PABPN1.</text>
</comment>
<comment type="subcellular location">
    <subcellularLocation>
        <location evidence="1">Host nucleus</location>
    </subcellularLocation>
    <subcellularLocation>
        <location evidence="1">Host cytoplasm</location>
    </subcellularLocation>
    <text evidence="1">In uninfected, transfected cells, NS1 is localized in the nucleus. Only in virus infected cells, the nuclear export signal is unveiled, presumably by a viral protein, and a fraction of NS1 is exported in the cytoplasm.</text>
</comment>
<comment type="alternative products">
    <event type="alternative splicing"/>
    <isoform>
        <id>O57276-1</id>
        <name>NS1</name>
        <sequence type="displayed"/>
    </isoform>
    <isoform>
        <id>O57275-1</id>
        <name>NEP</name>
        <name>NS2</name>
        <sequence type="external"/>
    </isoform>
</comment>
<comment type="domain">
    <text evidence="1">The dsRNA-binding region is required for suppression of RNA silencing.</text>
</comment>
<comment type="PTM">
    <text evidence="1">Upon interferon induction, ISGylated via host HERC5; this results in the impairment of NS1 interaction with RNA targets due to its inability to form homodimers and to interact with host EIF2AK2/PKR.</text>
</comment>
<comment type="similarity">
    <text evidence="1">Belongs to the influenza A viruses NS1 family.</text>
</comment>
<keyword id="KW-0025">Alternative splicing</keyword>
<keyword id="KW-1262">Eukaryotic host gene expression shutoff by virus</keyword>
<keyword id="KW-1035">Host cytoplasm</keyword>
<keyword id="KW-1190">Host gene expression shutoff by virus</keyword>
<keyword id="KW-1192">Host mRNA suppression by virus</keyword>
<keyword id="KW-1048">Host nucleus</keyword>
<keyword id="KW-0945">Host-virus interaction</keyword>
<keyword id="KW-1090">Inhibition of host innate immune response by virus</keyword>
<keyword id="KW-1114">Inhibition of host interferon signaling pathway by virus</keyword>
<keyword id="KW-1102">Inhibition of host PKR by virus</keyword>
<keyword id="KW-1103">Inhibition of host pre-mRNA processing by virus</keyword>
<keyword id="KW-1088">Inhibition of host RIG-I by virus</keyword>
<keyword id="KW-1113">Inhibition of host RLR pathway by virus</keyword>
<keyword id="KW-0922">Interferon antiviral system evasion</keyword>
<keyword id="KW-0694">RNA-binding</keyword>
<keyword id="KW-0832">Ubl conjugation</keyword>
<keyword id="KW-0899">Viral immunoevasion</keyword>
<evidence type="ECO:0000255" key="1">
    <source>
        <dbReference type="HAMAP-Rule" id="MF_04066"/>
    </source>
</evidence>
<evidence type="ECO:0000256" key="2">
    <source>
        <dbReference type="SAM" id="MobiDB-lite"/>
    </source>
</evidence>
<organism>
    <name type="scientific">Influenza A virus (strain A/Herring gull/DE/677/1988 H2N8)</name>
    <dbReference type="NCBI Taxonomy" id="387243"/>
    <lineage>
        <taxon>Viruses</taxon>
        <taxon>Riboviria</taxon>
        <taxon>Orthornavirae</taxon>
        <taxon>Negarnaviricota</taxon>
        <taxon>Polyploviricotina</taxon>
        <taxon>Insthoviricetes</taxon>
        <taxon>Articulavirales</taxon>
        <taxon>Orthomyxoviridae</taxon>
        <taxon>Alphainfluenzavirus</taxon>
        <taxon>Alphainfluenzavirus influenzae</taxon>
        <taxon>Influenza A virus</taxon>
    </lineage>
</organism>
<name>NS1_I88A4</name>
<proteinExistence type="inferred from homology"/>
<gene>
    <name evidence="1" type="primary">NS</name>
</gene>
<sequence length="230" mass="26096">MDSNTMSSFQVDCFLWHVRKRIADQELGDAPFLDRLRRDQKSLRGRGNTLGLDIETATRAGKQIVERILEEESDEAPKMTIASVPASRYLTDMTLEEMSREWFMLMPKQKVAGSLCIRMDQAIMDKNIILKANFSVIFDRLETLILLRAFTEEGAIVGEISPLPSLPGHTDEDVKNAIGVLIGGLEWNDNTVRVSETLQRFAWRSSNEDGRPSLPPKQKRKMARTIESEV</sequence>
<feature type="chain" id="PRO_0000324278" description="Non-structural protein 1">
    <location>
        <begin position="1"/>
        <end position="230"/>
    </location>
</feature>
<feature type="region of interest" description="RNA-binding and homodimerization" evidence="1">
    <location>
        <begin position="1"/>
        <end position="73"/>
    </location>
</feature>
<feature type="region of interest" description="CPSF4-binding" evidence="1">
    <location>
        <begin position="180"/>
        <end position="215"/>
    </location>
</feature>
<feature type="region of interest" description="Disordered" evidence="2">
    <location>
        <begin position="206"/>
        <end position="230"/>
    </location>
</feature>
<feature type="region of interest" description="PABPN1-binding" evidence="1">
    <location>
        <begin position="223"/>
        <end position="230"/>
    </location>
</feature>
<feature type="short sequence motif" description="Nuclear localization signal" evidence="1">
    <location>
        <begin position="34"/>
        <end position="38"/>
    </location>
</feature>
<feature type="short sequence motif" description="Nuclear export signal" evidence="1">
    <location>
        <begin position="137"/>
        <end position="146"/>
    </location>
</feature>
<dbReference type="EMBL" id="U96745">
    <property type="protein sequence ID" value="AAB93949.1"/>
    <property type="molecule type" value="Genomic_RNA"/>
</dbReference>
<dbReference type="SMR" id="O57276"/>
<dbReference type="Proteomes" id="UP000160453">
    <property type="component" value="Genome"/>
</dbReference>
<dbReference type="GO" id="GO:0030430">
    <property type="term" value="C:host cell cytoplasm"/>
    <property type="evidence" value="ECO:0007669"/>
    <property type="project" value="UniProtKB-SubCell"/>
</dbReference>
<dbReference type="GO" id="GO:0042025">
    <property type="term" value="C:host cell nucleus"/>
    <property type="evidence" value="ECO:0007669"/>
    <property type="project" value="UniProtKB-SubCell"/>
</dbReference>
<dbReference type="GO" id="GO:0030291">
    <property type="term" value="F:protein serine/threonine kinase inhibitor activity"/>
    <property type="evidence" value="ECO:0007669"/>
    <property type="project" value="UniProtKB-KW"/>
</dbReference>
<dbReference type="GO" id="GO:0003723">
    <property type="term" value="F:RNA binding"/>
    <property type="evidence" value="ECO:0007669"/>
    <property type="project" value="UniProtKB-KW"/>
</dbReference>
<dbReference type="GO" id="GO:0039540">
    <property type="term" value="P:symbiont-mediated suppression of host cytoplasmic pattern recognition receptor signaling pathway via inhibition of RIG-I activity"/>
    <property type="evidence" value="ECO:0007669"/>
    <property type="project" value="UniProtKB-KW"/>
</dbReference>
<dbReference type="GO" id="GO:0039657">
    <property type="term" value="P:symbiont-mediated suppression of host gene expression"/>
    <property type="evidence" value="ECO:0007669"/>
    <property type="project" value="UniProtKB-KW"/>
</dbReference>
<dbReference type="GO" id="GO:0039524">
    <property type="term" value="P:symbiont-mediated suppression of host mRNA processing"/>
    <property type="evidence" value="ECO:0007669"/>
    <property type="project" value="UniProtKB-KW"/>
</dbReference>
<dbReference type="GO" id="GO:0039580">
    <property type="term" value="P:symbiont-mediated suppression of host PKR/eIFalpha signaling"/>
    <property type="evidence" value="ECO:0007669"/>
    <property type="project" value="UniProtKB-KW"/>
</dbReference>
<dbReference type="GO" id="GO:0039502">
    <property type="term" value="P:symbiont-mediated suppression of host type I interferon-mediated signaling pathway"/>
    <property type="evidence" value="ECO:0007669"/>
    <property type="project" value="UniProtKB-KW"/>
</dbReference>
<dbReference type="FunFam" id="1.10.287.10:FF:000001">
    <property type="entry name" value="Non-structural protein 1"/>
    <property type="match status" value="1"/>
</dbReference>
<dbReference type="FunFam" id="3.30.420.330:FF:000001">
    <property type="entry name" value="Non-structural protein 1"/>
    <property type="match status" value="1"/>
</dbReference>
<dbReference type="Gene3D" id="3.30.420.330">
    <property type="entry name" value="Influenza virus non-structural protein, effector domain"/>
    <property type="match status" value="1"/>
</dbReference>
<dbReference type="Gene3D" id="1.10.287.10">
    <property type="entry name" value="S15/NS1, RNA-binding"/>
    <property type="match status" value="1"/>
</dbReference>
<dbReference type="HAMAP" id="MF_04066">
    <property type="entry name" value="INFV_NS1"/>
    <property type="match status" value="1"/>
</dbReference>
<dbReference type="InterPro" id="IPR004208">
    <property type="entry name" value="NS1"/>
</dbReference>
<dbReference type="InterPro" id="IPR000256">
    <property type="entry name" value="NS1A"/>
</dbReference>
<dbReference type="InterPro" id="IPR038064">
    <property type="entry name" value="NS1A_effect_dom-like_sf"/>
</dbReference>
<dbReference type="InterPro" id="IPR009068">
    <property type="entry name" value="uS15_NS1_RNA-bd_sf"/>
</dbReference>
<dbReference type="Pfam" id="PF00600">
    <property type="entry name" value="Flu_NS1"/>
    <property type="match status" value="1"/>
</dbReference>
<dbReference type="SUPFAM" id="SSF143021">
    <property type="entry name" value="Ns1 effector domain-like"/>
    <property type="match status" value="1"/>
</dbReference>
<dbReference type="SUPFAM" id="SSF47060">
    <property type="entry name" value="S15/NS1 RNA-binding domain"/>
    <property type="match status" value="1"/>
</dbReference>
<protein>
    <recommendedName>
        <fullName evidence="1">Non-structural protein 1</fullName>
        <shortName evidence="1">NS1</shortName>
    </recommendedName>
    <alternativeName>
        <fullName evidence="1">NS1A</fullName>
    </alternativeName>
</protein>
<organismHost>
    <name type="scientific">Aves</name>
    <dbReference type="NCBI Taxonomy" id="8782"/>
</organismHost>